<proteinExistence type="evidence at transcript level"/>
<evidence type="ECO:0000255" key="1"/>
<evidence type="ECO:0000305" key="2"/>
<comment type="function">
    <text>May play a role in neural plasticity. May be involved during axon regeneration.</text>
</comment>
<comment type="subcellular location">
    <subcellularLocation>
        <location>Secreted</location>
    </subcellularLocation>
</comment>
<comment type="tissue specificity">
    <text>EPDs are synthesized in the meninx and secreted in the cerebrospinal fluid.</text>
</comment>
<comment type="PTM">
    <text>Binds calcium through the terminal sialic acids.</text>
</comment>
<comment type="similarity">
    <text evidence="2">Belongs to the ependymin family.</text>
</comment>
<reference key="1">
    <citation type="journal article" date="1992" name="Gene">
        <title>Ependymins from the cerebrospinal fluid of salmonid fish: gene structure and molecular characterization.</title>
        <authorList>
            <person name="Mueller-Schmid A."/>
            <person name="Rinder H."/>
            <person name="Lottspeich F."/>
            <person name="Gertzen E.-M."/>
            <person name="Hoffmann W."/>
        </authorList>
    </citation>
    <scope>NUCLEOTIDE SEQUENCE [GENOMIC DNA]</scope>
    <source>
        <tissue>Cerebrospinal fluid</tissue>
    </source>
</reference>
<organism>
    <name type="scientific">Salmo salar</name>
    <name type="common">Atlantic salmon</name>
    <dbReference type="NCBI Taxonomy" id="8030"/>
    <lineage>
        <taxon>Eukaryota</taxon>
        <taxon>Metazoa</taxon>
        <taxon>Chordata</taxon>
        <taxon>Craniata</taxon>
        <taxon>Vertebrata</taxon>
        <taxon>Euteleostomi</taxon>
        <taxon>Actinopterygii</taxon>
        <taxon>Neopterygii</taxon>
        <taxon>Teleostei</taxon>
        <taxon>Protacanthopterygii</taxon>
        <taxon>Salmoniformes</taxon>
        <taxon>Salmonidae</taxon>
        <taxon>Salmoninae</taxon>
        <taxon>Salmo</taxon>
    </lineage>
</organism>
<dbReference type="EMBL" id="M93699">
    <property type="protein sequence ID" value="AAA49551.1"/>
    <property type="molecule type" value="Genomic_DNA"/>
</dbReference>
<dbReference type="SMR" id="P28772"/>
<dbReference type="STRING" id="8030.ENSSSAP00000098870"/>
<dbReference type="GlyCosmos" id="P28772">
    <property type="glycosylation" value="3 sites, No reported glycans"/>
</dbReference>
<dbReference type="PaxDb" id="8030-ENSSSAP00000098870"/>
<dbReference type="Ensembl" id="ENSSSAT00070065111">
    <property type="protein sequence ID" value="ENSSSAP00070062421"/>
    <property type="gene ID" value="ENSSSAG00070040495"/>
</dbReference>
<dbReference type="Proteomes" id="UP000087266">
    <property type="component" value="Unplaced"/>
</dbReference>
<dbReference type="Bgee" id="ENSSSAG00000073991">
    <property type="expression patterns" value="Expressed in brain and 9 other cell types or tissues"/>
</dbReference>
<dbReference type="GO" id="GO:0005576">
    <property type="term" value="C:extracellular region"/>
    <property type="evidence" value="ECO:0007669"/>
    <property type="project" value="UniProtKB-SubCell"/>
</dbReference>
<dbReference type="GO" id="GO:0005764">
    <property type="term" value="C:lysosome"/>
    <property type="evidence" value="ECO:0007669"/>
    <property type="project" value="TreeGrafter"/>
</dbReference>
<dbReference type="GO" id="GO:0005509">
    <property type="term" value="F:calcium ion binding"/>
    <property type="evidence" value="ECO:0007669"/>
    <property type="project" value="InterPro"/>
</dbReference>
<dbReference type="GO" id="GO:0007160">
    <property type="term" value="P:cell-matrix adhesion"/>
    <property type="evidence" value="ECO:0007669"/>
    <property type="project" value="InterPro"/>
</dbReference>
<dbReference type="InterPro" id="IPR001299">
    <property type="entry name" value="Ependymin"/>
</dbReference>
<dbReference type="InterPro" id="IPR018224">
    <property type="entry name" value="Ependymin_CS"/>
</dbReference>
<dbReference type="PANTHER" id="PTHR10697:SF5">
    <property type="entry name" value="EPENDYMIN-RELATED"/>
    <property type="match status" value="1"/>
</dbReference>
<dbReference type="PANTHER" id="PTHR10697">
    <property type="entry name" value="MAMMALIAN EPENDYMIN-RELATED PROTEIN 1"/>
    <property type="match status" value="1"/>
</dbReference>
<dbReference type="Pfam" id="PF00811">
    <property type="entry name" value="Ependymin"/>
    <property type="match status" value="1"/>
</dbReference>
<dbReference type="PRINTS" id="PR00317">
    <property type="entry name" value="EPENDYMIN"/>
</dbReference>
<dbReference type="SMART" id="SM00026">
    <property type="entry name" value="EPEND"/>
    <property type="match status" value="1"/>
</dbReference>
<dbReference type="PROSITE" id="PS00898">
    <property type="entry name" value="EPENDYMIN_1"/>
    <property type="match status" value="1"/>
</dbReference>
<dbReference type="PROSITE" id="PS00899">
    <property type="entry name" value="EPENDYMIN_2"/>
    <property type="match status" value="1"/>
</dbReference>
<protein>
    <recommendedName>
        <fullName>Ependymin-2</fullName>
    </recommendedName>
    <alternativeName>
        <fullName>Ependymin II</fullName>
        <shortName>EPD-II</shortName>
    </alternativeName>
</protein>
<feature type="signal peptide" evidence="1">
    <location>
        <begin position="1"/>
        <end position="21"/>
    </location>
</feature>
<feature type="chain" id="PRO_0000008350" description="Ependymin-2">
    <location>
        <begin position="22"/>
        <end position="221"/>
    </location>
</feature>
<feature type="glycosylation site" description="N-linked (GlcNAc...) asparagine" evidence="1">
    <location>
        <position position="33"/>
    </location>
</feature>
<feature type="glycosylation site" description="N-linked (GlcNAc...) asparagine" evidence="1">
    <location>
        <position position="73"/>
    </location>
</feature>
<feature type="glycosylation site" description="N-linked (GlcNAc...) asparagine" evidence="1">
    <location>
        <position position="97"/>
    </location>
</feature>
<sequence length="221" mass="24510">MQDFAFAALSIWLCLGATALAESHGPQHCTSPNMTGVLTVMALTGGEIKATGHYSYDSTDKKLRFTESEMHLNKTEHLEDYLMLFEEGVFYDIDMKNQSCKKMSLHSHAHALELPAGAAHQVELFLGSDTVQEENIKVNIWMGSVAETKGQYSVLTTVGECLPLSTFYSTDSITLLFSNSEVVTEVKAPEMFTLPSFCEAVELEETPKGQKNDFFNIFNTV</sequence>
<gene>
    <name type="primary">epd2</name>
</gene>
<keyword id="KW-0106">Calcium</keyword>
<keyword id="KW-0325">Glycoprotein</keyword>
<keyword id="KW-1185">Reference proteome</keyword>
<keyword id="KW-0964">Secreted</keyword>
<keyword id="KW-0732">Signal</keyword>
<name>EPD2_SALSA</name>
<accession>P28772</accession>